<accession>C1F934</accession>
<reference key="1">
    <citation type="journal article" date="2009" name="Appl. Environ. Microbiol.">
        <title>Three genomes from the phylum Acidobacteria provide insight into the lifestyles of these microorganisms in soils.</title>
        <authorList>
            <person name="Ward N.L."/>
            <person name="Challacombe J.F."/>
            <person name="Janssen P.H."/>
            <person name="Henrissat B."/>
            <person name="Coutinho P.M."/>
            <person name="Wu M."/>
            <person name="Xie G."/>
            <person name="Haft D.H."/>
            <person name="Sait M."/>
            <person name="Badger J."/>
            <person name="Barabote R.D."/>
            <person name="Bradley B."/>
            <person name="Brettin T.S."/>
            <person name="Brinkac L.M."/>
            <person name="Bruce D."/>
            <person name="Creasy T."/>
            <person name="Daugherty S.C."/>
            <person name="Davidsen T.M."/>
            <person name="DeBoy R.T."/>
            <person name="Detter J.C."/>
            <person name="Dodson R.J."/>
            <person name="Durkin A.S."/>
            <person name="Ganapathy A."/>
            <person name="Gwinn-Giglio M."/>
            <person name="Han C.S."/>
            <person name="Khouri H."/>
            <person name="Kiss H."/>
            <person name="Kothari S.P."/>
            <person name="Madupu R."/>
            <person name="Nelson K.E."/>
            <person name="Nelson W.C."/>
            <person name="Paulsen I."/>
            <person name="Penn K."/>
            <person name="Ren Q."/>
            <person name="Rosovitz M.J."/>
            <person name="Selengut J.D."/>
            <person name="Shrivastava S."/>
            <person name="Sullivan S.A."/>
            <person name="Tapia R."/>
            <person name="Thompson L.S."/>
            <person name="Watkins K.L."/>
            <person name="Yang Q."/>
            <person name="Yu C."/>
            <person name="Zafar N."/>
            <person name="Zhou L."/>
            <person name="Kuske C.R."/>
        </authorList>
    </citation>
    <scope>NUCLEOTIDE SEQUENCE [LARGE SCALE GENOMIC DNA]</scope>
    <source>
        <strain>ATCC 51196 / DSM 11244 / BCRC 80197 / JCM 7670 / NBRC 15755 / NCIMB 13165 / 161</strain>
    </source>
</reference>
<gene>
    <name evidence="1" type="primary">gcvH</name>
    <name type="ordered locus">ACP_2097</name>
</gene>
<sequence length="129" mass="14028">MAYPANYRYTREHEWIEIDGKTGTVGITDYAQNSLGDIVFVESPKVGDKIEKGKVFGSVESVKAVSDLYAPVSGTVTAVNEELANAPEKINTDAHTAWIMKIELSDAAEAESLLDATAYEAFVKEETGH</sequence>
<organism>
    <name type="scientific">Acidobacterium capsulatum (strain ATCC 51196 / DSM 11244 / BCRC 80197 / JCM 7670 / NBRC 15755 / NCIMB 13165 / 161)</name>
    <dbReference type="NCBI Taxonomy" id="240015"/>
    <lineage>
        <taxon>Bacteria</taxon>
        <taxon>Pseudomonadati</taxon>
        <taxon>Acidobacteriota</taxon>
        <taxon>Terriglobia</taxon>
        <taxon>Terriglobales</taxon>
        <taxon>Acidobacteriaceae</taxon>
        <taxon>Acidobacterium</taxon>
    </lineage>
</organism>
<name>GCSH_ACIC5</name>
<proteinExistence type="inferred from homology"/>
<dbReference type="EMBL" id="CP001472">
    <property type="protein sequence ID" value="ACO32455.1"/>
    <property type="molecule type" value="Genomic_DNA"/>
</dbReference>
<dbReference type="RefSeq" id="WP_015897198.1">
    <property type="nucleotide sequence ID" value="NC_012483.1"/>
</dbReference>
<dbReference type="SMR" id="C1F934"/>
<dbReference type="FunCoup" id="C1F934">
    <property type="interactions" value="531"/>
</dbReference>
<dbReference type="STRING" id="240015.ACP_2097"/>
<dbReference type="KEGG" id="aca:ACP_2097"/>
<dbReference type="eggNOG" id="COG0509">
    <property type="taxonomic scope" value="Bacteria"/>
</dbReference>
<dbReference type="HOGENOM" id="CLU_097408_2_2_0"/>
<dbReference type="InParanoid" id="C1F934"/>
<dbReference type="OrthoDB" id="9796712at2"/>
<dbReference type="Proteomes" id="UP000002207">
    <property type="component" value="Chromosome"/>
</dbReference>
<dbReference type="GO" id="GO:0005829">
    <property type="term" value="C:cytosol"/>
    <property type="evidence" value="ECO:0007669"/>
    <property type="project" value="TreeGrafter"/>
</dbReference>
<dbReference type="GO" id="GO:0005960">
    <property type="term" value="C:glycine cleavage complex"/>
    <property type="evidence" value="ECO:0007669"/>
    <property type="project" value="InterPro"/>
</dbReference>
<dbReference type="GO" id="GO:0019464">
    <property type="term" value="P:glycine decarboxylation via glycine cleavage system"/>
    <property type="evidence" value="ECO:0007669"/>
    <property type="project" value="UniProtKB-UniRule"/>
</dbReference>
<dbReference type="CDD" id="cd06848">
    <property type="entry name" value="GCS_H"/>
    <property type="match status" value="1"/>
</dbReference>
<dbReference type="Gene3D" id="2.40.50.100">
    <property type="match status" value="1"/>
</dbReference>
<dbReference type="HAMAP" id="MF_00272">
    <property type="entry name" value="GcvH"/>
    <property type="match status" value="1"/>
</dbReference>
<dbReference type="InterPro" id="IPR003016">
    <property type="entry name" value="2-oxoA_DH_lipoyl-BS"/>
</dbReference>
<dbReference type="InterPro" id="IPR000089">
    <property type="entry name" value="Biotin_lipoyl"/>
</dbReference>
<dbReference type="InterPro" id="IPR002930">
    <property type="entry name" value="GCV_H"/>
</dbReference>
<dbReference type="InterPro" id="IPR033753">
    <property type="entry name" value="GCV_H/Fam206"/>
</dbReference>
<dbReference type="InterPro" id="IPR017453">
    <property type="entry name" value="GCV_H_sub"/>
</dbReference>
<dbReference type="InterPro" id="IPR011053">
    <property type="entry name" value="Single_hybrid_motif"/>
</dbReference>
<dbReference type="NCBIfam" id="TIGR00527">
    <property type="entry name" value="gcvH"/>
    <property type="match status" value="1"/>
</dbReference>
<dbReference type="NCBIfam" id="NF002270">
    <property type="entry name" value="PRK01202.1"/>
    <property type="match status" value="1"/>
</dbReference>
<dbReference type="PANTHER" id="PTHR11715">
    <property type="entry name" value="GLYCINE CLEAVAGE SYSTEM H PROTEIN"/>
    <property type="match status" value="1"/>
</dbReference>
<dbReference type="PANTHER" id="PTHR11715:SF3">
    <property type="entry name" value="GLYCINE CLEAVAGE SYSTEM H PROTEIN-RELATED"/>
    <property type="match status" value="1"/>
</dbReference>
<dbReference type="Pfam" id="PF01597">
    <property type="entry name" value="GCV_H"/>
    <property type="match status" value="1"/>
</dbReference>
<dbReference type="SUPFAM" id="SSF51230">
    <property type="entry name" value="Single hybrid motif"/>
    <property type="match status" value="1"/>
</dbReference>
<dbReference type="PROSITE" id="PS50968">
    <property type="entry name" value="BIOTINYL_LIPOYL"/>
    <property type="match status" value="1"/>
</dbReference>
<dbReference type="PROSITE" id="PS00189">
    <property type="entry name" value="LIPOYL"/>
    <property type="match status" value="1"/>
</dbReference>
<comment type="function">
    <text evidence="1">The glycine cleavage system catalyzes the degradation of glycine. The H protein shuttles the methylamine group of glycine from the P protein to the T protein.</text>
</comment>
<comment type="cofactor">
    <cofactor evidence="1">
        <name>(R)-lipoate</name>
        <dbReference type="ChEBI" id="CHEBI:83088"/>
    </cofactor>
    <text evidence="1">Binds 1 lipoyl cofactor covalently.</text>
</comment>
<comment type="subunit">
    <text evidence="1">The glycine cleavage system is composed of four proteins: P, T, L and H.</text>
</comment>
<comment type="similarity">
    <text evidence="1">Belongs to the GcvH family.</text>
</comment>
<protein>
    <recommendedName>
        <fullName evidence="1">Glycine cleavage system H protein</fullName>
    </recommendedName>
</protein>
<evidence type="ECO:0000255" key="1">
    <source>
        <dbReference type="HAMAP-Rule" id="MF_00272"/>
    </source>
</evidence>
<evidence type="ECO:0000255" key="2">
    <source>
        <dbReference type="PROSITE-ProRule" id="PRU01066"/>
    </source>
</evidence>
<keyword id="KW-0450">Lipoyl</keyword>
<keyword id="KW-1185">Reference proteome</keyword>
<feature type="chain" id="PRO_1000190185" description="Glycine cleavage system H protein">
    <location>
        <begin position="1"/>
        <end position="129"/>
    </location>
</feature>
<feature type="domain" description="Lipoyl-binding" evidence="2">
    <location>
        <begin position="22"/>
        <end position="103"/>
    </location>
</feature>
<feature type="modified residue" description="N6-lipoyllysine" evidence="1">
    <location>
        <position position="63"/>
    </location>
</feature>